<sequence length="171" mass="19717">MKRTKKYPFLTLQRQRFHLNFENASSAAGIPAERDFYRWAWSALKSGYRRADISLILLDEEEARAYNRDYRGKDYATNVLSFALNEGEILPCQVSEKLYGDLIICPQVVLKEAAEQGKTPERHFAHLTIHGVLHLMGYDHIEDDEAEIMEAEEIRLMLAAGFPNPYQEDGH</sequence>
<name>YBEY_NEIMA</name>
<organism>
    <name type="scientific">Neisseria meningitidis serogroup A / serotype 4A (strain DSM 15465 / Z2491)</name>
    <dbReference type="NCBI Taxonomy" id="122587"/>
    <lineage>
        <taxon>Bacteria</taxon>
        <taxon>Pseudomonadati</taxon>
        <taxon>Pseudomonadota</taxon>
        <taxon>Betaproteobacteria</taxon>
        <taxon>Neisseriales</taxon>
        <taxon>Neisseriaceae</taxon>
        <taxon>Neisseria</taxon>
    </lineage>
</organism>
<gene>
    <name evidence="1" type="primary">ybeY</name>
    <name type="ordered locus">NMA0717</name>
</gene>
<accession>Q9JVS5</accession>
<accession>A1IQE0</accession>
<protein>
    <recommendedName>
        <fullName evidence="1">Endoribonuclease YbeY</fullName>
        <ecNumber evidence="1">3.1.-.-</ecNumber>
    </recommendedName>
</protein>
<reference key="1">
    <citation type="journal article" date="2000" name="Nature">
        <title>Complete DNA sequence of a serogroup A strain of Neisseria meningitidis Z2491.</title>
        <authorList>
            <person name="Parkhill J."/>
            <person name="Achtman M."/>
            <person name="James K.D."/>
            <person name="Bentley S.D."/>
            <person name="Churcher C.M."/>
            <person name="Klee S.R."/>
            <person name="Morelli G."/>
            <person name="Basham D."/>
            <person name="Brown D."/>
            <person name="Chillingworth T."/>
            <person name="Davies R.M."/>
            <person name="Davis P."/>
            <person name="Devlin K."/>
            <person name="Feltwell T."/>
            <person name="Hamlin N."/>
            <person name="Holroyd S."/>
            <person name="Jagels K."/>
            <person name="Leather S."/>
            <person name="Moule S."/>
            <person name="Mungall K.L."/>
            <person name="Quail M.A."/>
            <person name="Rajandream M.A."/>
            <person name="Rutherford K.M."/>
            <person name="Simmonds M."/>
            <person name="Skelton J."/>
            <person name="Whitehead S."/>
            <person name="Spratt B.G."/>
            <person name="Barrell B.G."/>
        </authorList>
    </citation>
    <scope>NUCLEOTIDE SEQUENCE [LARGE SCALE GENOMIC DNA]</scope>
    <source>
        <strain>DSM 15465 / Z2491</strain>
    </source>
</reference>
<evidence type="ECO:0000255" key="1">
    <source>
        <dbReference type="HAMAP-Rule" id="MF_00009"/>
    </source>
</evidence>
<comment type="function">
    <text evidence="1">Single strand-specific metallo-endoribonuclease involved in late-stage 70S ribosome quality control and in maturation of the 3' terminus of the 16S rRNA.</text>
</comment>
<comment type="cofactor">
    <cofactor evidence="1">
        <name>Zn(2+)</name>
        <dbReference type="ChEBI" id="CHEBI:29105"/>
    </cofactor>
    <text evidence="1">Binds 1 zinc ion.</text>
</comment>
<comment type="subcellular location">
    <subcellularLocation>
        <location evidence="1">Cytoplasm</location>
    </subcellularLocation>
</comment>
<comment type="similarity">
    <text evidence="1">Belongs to the endoribonuclease YbeY family.</text>
</comment>
<dbReference type="EC" id="3.1.-.-" evidence="1"/>
<dbReference type="EMBL" id="AL157959">
    <property type="protein sequence ID" value="CAM07971.1"/>
    <property type="molecule type" value="Genomic_DNA"/>
</dbReference>
<dbReference type="PIR" id="H81914">
    <property type="entry name" value="H81914"/>
</dbReference>
<dbReference type="RefSeq" id="WP_002246825.1">
    <property type="nucleotide sequence ID" value="NC_003116.1"/>
</dbReference>
<dbReference type="SMR" id="Q9JVS5"/>
<dbReference type="EnsemblBacteria" id="CAM07971">
    <property type="protein sequence ID" value="CAM07971"/>
    <property type="gene ID" value="NMA0717"/>
</dbReference>
<dbReference type="KEGG" id="nma:NMA0717"/>
<dbReference type="HOGENOM" id="CLU_106710_0_1_4"/>
<dbReference type="Proteomes" id="UP000000626">
    <property type="component" value="Chromosome"/>
</dbReference>
<dbReference type="GO" id="GO:0005737">
    <property type="term" value="C:cytoplasm"/>
    <property type="evidence" value="ECO:0007669"/>
    <property type="project" value="UniProtKB-SubCell"/>
</dbReference>
<dbReference type="GO" id="GO:0004222">
    <property type="term" value="F:metalloendopeptidase activity"/>
    <property type="evidence" value="ECO:0007669"/>
    <property type="project" value="InterPro"/>
</dbReference>
<dbReference type="GO" id="GO:0004521">
    <property type="term" value="F:RNA endonuclease activity"/>
    <property type="evidence" value="ECO:0007669"/>
    <property type="project" value="UniProtKB-UniRule"/>
</dbReference>
<dbReference type="GO" id="GO:0008270">
    <property type="term" value="F:zinc ion binding"/>
    <property type="evidence" value="ECO:0007669"/>
    <property type="project" value="UniProtKB-UniRule"/>
</dbReference>
<dbReference type="GO" id="GO:0006364">
    <property type="term" value="P:rRNA processing"/>
    <property type="evidence" value="ECO:0007669"/>
    <property type="project" value="UniProtKB-UniRule"/>
</dbReference>
<dbReference type="Gene3D" id="3.40.390.30">
    <property type="entry name" value="Metalloproteases ('zincins'), catalytic domain"/>
    <property type="match status" value="1"/>
</dbReference>
<dbReference type="HAMAP" id="MF_00009">
    <property type="entry name" value="Endoribonucl_YbeY"/>
    <property type="match status" value="1"/>
</dbReference>
<dbReference type="InterPro" id="IPR023091">
    <property type="entry name" value="MetalPrtase_cat_dom_sf_prd"/>
</dbReference>
<dbReference type="InterPro" id="IPR002036">
    <property type="entry name" value="YbeY"/>
</dbReference>
<dbReference type="InterPro" id="IPR020549">
    <property type="entry name" value="YbeY_CS"/>
</dbReference>
<dbReference type="NCBIfam" id="TIGR00043">
    <property type="entry name" value="rRNA maturation RNase YbeY"/>
    <property type="match status" value="1"/>
</dbReference>
<dbReference type="PANTHER" id="PTHR46986">
    <property type="entry name" value="ENDORIBONUCLEASE YBEY, CHLOROPLASTIC"/>
    <property type="match status" value="1"/>
</dbReference>
<dbReference type="PANTHER" id="PTHR46986:SF1">
    <property type="entry name" value="ENDORIBONUCLEASE YBEY, CHLOROPLASTIC"/>
    <property type="match status" value="1"/>
</dbReference>
<dbReference type="Pfam" id="PF02130">
    <property type="entry name" value="YbeY"/>
    <property type="match status" value="1"/>
</dbReference>
<dbReference type="SUPFAM" id="SSF55486">
    <property type="entry name" value="Metalloproteases ('zincins'), catalytic domain"/>
    <property type="match status" value="1"/>
</dbReference>
<dbReference type="PROSITE" id="PS01306">
    <property type="entry name" value="UPF0054"/>
    <property type="match status" value="1"/>
</dbReference>
<keyword id="KW-0963">Cytoplasm</keyword>
<keyword id="KW-0255">Endonuclease</keyword>
<keyword id="KW-0378">Hydrolase</keyword>
<keyword id="KW-0479">Metal-binding</keyword>
<keyword id="KW-0540">Nuclease</keyword>
<keyword id="KW-0690">Ribosome biogenesis</keyword>
<keyword id="KW-0698">rRNA processing</keyword>
<keyword id="KW-0862">Zinc</keyword>
<feature type="chain" id="PRO_0000102495" description="Endoribonuclease YbeY">
    <location>
        <begin position="1"/>
        <end position="171"/>
    </location>
</feature>
<feature type="binding site" evidence="1">
    <location>
        <position position="130"/>
    </location>
    <ligand>
        <name>Zn(2+)</name>
        <dbReference type="ChEBI" id="CHEBI:29105"/>
        <note>catalytic</note>
    </ligand>
</feature>
<feature type="binding site" evidence="1">
    <location>
        <position position="134"/>
    </location>
    <ligand>
        <name>Zn(2+)</name>
        <dbReference type="ChEBI" id="CHEBI:29105"/>
        <note>catalytic</note>
    </ligand>
</feature>
<feature type="binding site" evidence="1">
    <location>
        <position position="140"/>
    </location>
    <ligand>
        <name>Zn(2+)</name>
        <dbReference type="ChEBI" id="CHEBI:29105"/>
        <note>catalytic</note>
    </ligand>
</feature>
<proteinExistence type="inferred from homology"/>